<evidence type="ECO:0000255" key="1">
    <source>
        <dbReference type="HAMAP-Rule" id="MF_04014"/>
    </source>
</evidence>
<organism>
    <name type="scientific">Saimiriine herpesvirus 2 (strain 11)</name>
    <name type="common">SaHV-2</name>
    <name type="synonym">Herpesvirus saimiri</name>
    <dbReference type="NCBI Taxonomy" id="10383"/>
    <lineage>
        <taxon>Viruses</taxon>
        <taxon>Duplodnaviria</taxon>
        <taxon>Heunggongvirae</taxon>
        <taxon>Peploviricota</taxon>
        <taxon>Herviviricetes</taxon>
        <taxon>Herpesvirales</taxon>
        <taxon>Orthoherpesviridae</taxon>
        <taxon>Gammaherpesvirinae</taxon>
        <taxon>Rhadinovirus</taxon>
        <taxon>Rhadinovirus saimiriinegamma2</taxon>
        <taxon>Saimiriine herpesvirus 2</taxon>
    </lineage>
</organism>
<sequence>MAQHLAAVYSQIYGLTLDVSILTFVDPAHINWKTVTKNTEKINKIYLQIMPLLHNQNNIESTSLSVELQHLLHNLKIVLETFSAHLSDYNMYFENIHSLSAPCSRHKSIVFQFYNNCCVSVKMCIINDIEIFSKRLSSVFYCIRSCDALRGINHVIDFLGHLRGVSPIPLPDTYLSNIPCIYCLNEHMMLPNQGESLPSLMMCVNCKHVCKQLNPEPIQGMFENELLQRHIIVESNKQKEQNQTCSIDNQIRDASLSKLNQHTIFENISAPVLELSNLIYWSSGAHKKCANVENTSEMAKLLSYEAKMQNYRKYICKNSTHFFDKYKPYPIESIFCGGIFSSVDDTVKSLKSDCSLAFMKRANYQQLIKKQNELFVRLNKILQGEDTVSHAASAVPLSDKATIVNPDQVLHDAHARKDAYLQKVTKDGLKSLYTCLETQGAVLSNTLSMRVWGGAVYDEIVKLKNHFLFRDQFISLDWIHCETDSVTGFENSKYIKNLIYSQKLSSEHISSLTLQFYKLITGPLSQNVSFFPLPSNIALAHCLDAAGALPHHKLLLTEMIWPSIEPKDWVSQTYNKFYTITSTDLNSIQKEAWFFIRELVLSVSLYNEVLEKNLLVFSALNFEKNCVNLSPNQFCSGIYLTYEDSSPLIFVYENQGWVFKDLYALLYHHLQLSGKNHGT</sequence>
<reference key="1">
    <citation type="journal article" date="1990" name="Virology">
        <title>Structural organization of the conserved gene block of Herpesvirus saimiri coding for DNA polymerase, glycoprotein B, and major DNA binding protein.</title>
        <authorList>
            <person name="Albrecht J.-C."/>
            <person name="Fleckenstein B."/>
        </authorList>
    </citation>
    <scope>NUCLEOTIDE SEQUENCE [GENOMIC DNA]</scope>
</reference>
<reference key="2">
    <citation type="journal article" date="1992" name="J. Virol.">
        <title>Primary structure of the herpesvirus saimiri genome.</title>
        <authorList>
            <person name="Albrecht J.-C."/>
            <person name="Nicholas J."/>
            <person name="Biller D."/>
            <person name="Cameron K.R."/>
            <person name="Biesinger B."/>
            <person name="Newman C."/>
            <person name="Wittmann S."/>
            <person name="Craxton M.A."/>
            <person name="Coleman H."/>
            <person name="Fleckenstein B."/>
            <person name="Honess R.W."/>
        </authorList>
    </citation>
    <scope>NUCLEOTIDE SEQUENCE [LARGE SCALE GENOMIC DNA]</scope>
</reference>
<dbReference type="EMBL" id="X64346">
    <property type="protein sequence ID" value="CAA45630.1"/>
    <property type="molecule type" value="Genomic_DNA"/>
</dbReference>
<dbReference type="EMBL" id="M31122">
    <property type="protein sequence ID" value="AAA46163.1"/>
    <property type="molecule type" value="Genomic_DNA"/>
</dbReference>
<dbReference type="RefSeq" id="NP_040209.1">
    <property type="nucleotide sequence ID" value="NC_001350.1"/>
</dbReference>
<dbReference type="SMR" id="P24911"/>
<dbReference type="KEGG" id="vg:1682494"/>
<dbReference type="Proteomes" id="UP000000587">
    <property type="component" value="Segment"/>
</dbReference>
<dbReference type="GO" id="GO:0042025">
    <property type="term" value="C:host cell nucleus"/>
    <property type="evidence" value="ECO:0007669"/>
    <property type="project" value="UniProtKB-SubCell"/>
</dbReference>
<dbReference type="GO" id="GO:0005524">
    <property type="term" value="F:ATP binding"/>
    <property type="evidence" value="ECO:0007669"/>
    <property type="project" value="UniProtKB-KW"/>
</dbReference>
<dbReference type="GO" id="GO:0008270">
    <property type="term" value="F:zinc ion binding"/>
    <property type="evidence" value="ECO:0007669"/>
    <property type="project" value="UniProtKB-KW"/>
</dbReference>
<dbReference type="GO" id="GO:0019073">
    <property type="term" value="P:viral DNA genome packaging"/>
    <property type="evidence" value="ECO:0007669"/>
    <property type="project" value="InterPro"/>
</dbReference>
<dbReference type="HAMAP" id="MF_04014">
    <property type="entry name" value="HSV_TRM1"/>
    <property type="match status" value="1"/>
</dbReference>
<dbReference type="InterPro" id="IPR000501">
    <property type="entry name" value="UL28/UL56"/>
</dbReference>
<dbReference type="Pfam" id="PF01366">
    <property type="entry name" value="PRTP"/>
    <property type="match status" value="1"/>
</dbReference>
<comment type="function">
    <text evidence="1">Component of the molecular motor that translocates viral genomic DNA in empty capsid during DNA packaging. Forms a tripartite terminase complex together with TRM2 and TRM3 in the host cytoplasm. Once the complex reaches the host nucleus, it interacts with the capsid portal vertex. This portal forms a ring in which genomic DNA is translocated into the capsid. TRM1 carries an endonuclease activity that plays an important role for the cleavage of concatemeric viral DNA into unit length genomes.</text>
</comment>
<comment type="subunit">
    <text evidence="1">Associates with TRM2 and TRM3 to form the tripartite terminase complex. Interacts with portal protein.</text>
</comment>
<comment type="subcellular location">
    <subcellularLocation>
        <location evidence="1">Host nucleus</location>
    </subcellularLocation>
    <text evidence="1">Found associated with the external surface of the viral capsid during assembly and DNA packaging, but seems absent in extracellular mature virions.</text>
</comment>
<comment type="similarity">
    <text evidence="1">Belongs to the herpesviridae TRM1 protein family.</text>
</comment>
<keyword id="KW-0067">ATP-binding</keyword>
<keyword id="KW-1048">Host nucleus</keyword>
<keyword id="KW-0426">Late protein</keyword>
<keyword id="KW-0479">Metal-binding</keyword>
<keyword id="KW-0547">Nucleotide-binding</keyword>
<keyword id="KW-1185">Reference proteome</keyword>
<keyword id="KW-0231">Viral genome packaging</keyword>
<keyword id="KW-1188">Viral release from host cell</keyword>
<keyword id="KW-0862">Zinc</keyword>
<keyword id="KW-0863">Zinc-finger</keyword>
<organismHost>
    <name type="scientific">Saimiri sciureus</name>
    <name type="common">Common squirrel monkey</name>
    <dbReference type="NCBI Taxonomy" id="9521"/>
</organismHost>
<proteinExistence type="inferred from homology"/>
<gene>
    <name evidence="1" type="primary">TRM1</name>
    <name type="ordered locus">7</name>
</gene>
<accession>P24911</accession>
<name>TRM1_SHV21</name>
<protein>
    <recommendedName>
        <fullName evidence="1">Tripartite terminase subunit 1</fullName>
    </recommendedName>
</protein>
<feature type="chain" id="PRO_0000115885" description="Tripartite terminase subunit 1">
    <location>
        <begin position="1"/>
        <end position="679"/>
    </location>
</feature>
<feature type="zinc finger region" description="C3H1-type" evidence="1">
    <location>
        <begin position="180"/>
        <end position="208"/>
    </location>
</feature>